<reference key="1">
    <citation type="journal article" date="2008" name="PLoS Pathog.">
        <title>Histoplasma requires SID1, a member of an iron-regulated siderophore gene cluster, for host colonization.</title>
        <authorList>
            <person name="Hwang L.H."/>
            <person name="Mayfield J.A."/>
            <person name="Rine J."/>
            <person name="Sil A."/>
        </authorList>
    </citation>
    <scope>NUCLEOTIDE SEQUENCE [GENOMIC DNA]</scope>
    <scope>FUNCTION</scope>
    <scope>INDUCTION</scope>
    <source>
        <strain>ATCC 26032 / G217B</strain>
    </source>
</reference>
<reference key="2">
    <citation type="journal article" date="2005" name="Mol. Biol. Cell">
        <title>Identification of Histoplasma capsulatum transcripts induced in response to reactive nitrogen species.</title>
        <authorList>
            <person name="Nittler M.P."/>
            <person name="Hocking-Murray D."/>
            <person name="Foo C.K."/>
            <person name="Sil A."/>
        </authorList>
    </citation>
    <scope>INDUCTION</scope>
</reference>
<organism>
    <name type="scientific">Ajellomyces capsulatus</name>
    <name type="common">Darling's disease fungus</name>
    <name type="synonym">Histoplasma capsulatum</name>
    <dbReference type="NCBI Taxonomy" id="5037"/>
    <lineage>
        <taxon>Eukaryota</taxon>
        <taxon>Fungi</taxon>
        <taxon>Dikarya</taxon>
        <taxon>Ascomycota</taxon>
        <taxon>Pezizomycotina</taxon>
        <taxon>Eurotiomycetes</taxon>
        <taxon>Eurotiomycetidae</taxon>
        <taxon>Onygenales</taxon>
        <taxon>Ajellomycetaceae</taxon>
        <taxon>Histoplasma</taxon>
    </lineage>
</organism>
<evidence type="ECO:0000250" key="1">
    <source>
        <dbReference type="UniProtKB" id="A0A144KPJ6"/>
    </source>
</evidence>
<evidence type="ECO:0000255" key="2"/>
<evidence type="ECO:0000255" key="3">
    <source>
        <dbReference type="PROSITE-ProRule" id="PRU00258"/>
    </source>
</evidence>
<evidence type="ECO:0000269" key="4">
    <source>
    </source>
</evidence>
<evidence type="ECO:0000269" key="5">
    <source>
    </source>
</evidence>
<evidence type="ECO:0000303" key="6">
    <source>
    </source>
</evidence>
<evidence type="ECO:0000305" key="7"/>
<evidence type="ECO:0000305" key="8">
    <source>
    </source>
</evidence>
<keyword id="KW-0436">Ligase</keyword>
<keyword id="KW-0511">Multifunctional enzyme</keyword>
<keyword id="KW-0596">Phosphopantetheine</keyword>
<keyword id="KW-0597">Phosphoprotein</keyword>
<keyword id="KW-0677">Repeat</keyword>
<dbReference type="EC" id="6.3.2.-" evidence="8"/>
<dbReference type="EMBL" id="EU253973">
    <property type="protein sequence ID" value="ACC64451.1"/>
    <property type="molecule type" value="Genomic_DNA"/>
</dbReference>
<dbReference type="SMR" id="B2KWH8"/>
<dbReference type="GO" id="GO:0005737">
    <property type="term" value="C:cytoplasm"/>
    <property type="evidence" value="ECO:0007669"/>
    <property type="project" value="TreeGrafter"/>
</dbReference>
<dbReference type="GO" id="GO:0016874">
    <property type="term" value="F:ligase activity"/>
    <property type="evidence" value="ECO:0007669"/>
    <property type="project" value="UniProtKB-KW"/>
</dbReference>
<dbReference type="GO" id="GO:0031177">
    <property type="term" value="F:phosphopantetheine binding"/>
    <property type="evidence" value="ECO:0007669"/>
    <property type="project" value="InterPro"/>
</dbReference>
<dbReference type="GO" id="GO:0043041">
    <property type="term" value="P:amino acid activation for nonribosomal peptide biosynthetic process"/>
    <property type="evidence" value="ECO:0007669"/>
    <property type="project" value="TreeGrafter"/>
</dbReference>
<dbReference type="GO" id="GO:0044550">
    <property type="term" value="P:secondary metabolite biosynthetic process"/>
    <property type="evidence" value="ECO:0007669"/>
    <property type="project" value="TreeGrafter"/>
</dbReference>
<dbReference type="CDD" id="cd05918">
    <property type="entry name" value="A_NRPS_SidN3_like"/>
    <property type="match status" value="1"/>
</dbReference>
<dbReference type="CDD" id="cd19542">
    <property type="entry name" value="CT_NRPS-like"/>
    <property type="match status" value="1"/>
</dbReference>
<dbReference type="CDD" id="cd19545">
    <property type="entry name" value="FUM14_C_NRPS-like"/>
    <property type="match status" value="1"/>
</dbReference>
<dbReference type="FunFam" id="3.30.300.30:FF:000015">
    <property type="entry name" value="Nonribosomal peptide synthase SidD"/>
    <property type="match status" value="1"/>
</dbReference>
<dbReference type="FunFam" id="3.30.559.30:FF:000003">
    <property type="entry name" value="Nonribosomal peptide synthase SidD"/>
    <property type="match status" value="1"/>
</dbReference>
<dbReference type="FunFam" id="1.10.1200.10:FF:000005">
    <property type="entry name" value="Nonribosomal peptide synthetase 1"/>
    <property type="match status" value="2"/>
</dbReference>
<dbReference type="FunFam" id="3.40.50.12780:FF:000014">
    <property type="entry name" value="Nonribosomal peptide synthetase 1"/>
    <property type="match status" value="1"/>
</dbReference>
<dbReference type="Gene3D" id="3.30.300.30">
    <property type="match status" value="1"/>
</dbReference>
<dbReference type="Gene3D" id="1.10.1200.10">
    <property type="entry name" value="ACP-like"/>
    <property type="match status" value="2"/>
</dbReference>
<dbReference type="Gene3D" id="3.30.559.10">
    <property type="entry name" value="Chloramphenicol acetyltransferase-like domain"/>
    <property type="match status" value="2"/>
</dbReference>
<dbReference type="Gene3D" id="3.40.50.12780">
    <property type="entry name" value="N-terminal domain of ligase-like"/>
    <property type="match status" value="1"/>
</dbReference>
<dbReference type="Gene3D" id="3.30.559.30">
    <property type="entry name" value="Nonribosomal peptide synthetase, condensation domain"/>
    <property type="match status" value="2"/>
</dbReference>
<dbReference type="InterPro" id="IPR010071">
    <property type="entry name" value="AA_adenyl_dom"/>
</dbReference>
<dbReference type="InterPro" id="IPR036736">
    <property type="entry name" value="ACP-like_sf"/>
</dbReference>
<dbReference type="InterPro" id="IPR045851">
    <property type="entry name" value="AMP-bd_C_sf"/>
</dbReference>
<dbReference type="InterPro" id="IPR000873">
    <property type="entry name" value="AMP-dep_synth/lig_dom"/>
</dbReference>
<dbReference type="InterPro" id="IPR042099">
    <property type="entry name" value="ANL_N_sf"/>
</dbReference>
<dbReference type="InterPro" id="IPR023213">
    <property type="entry name" value="CAT-like_dom_sf"/>
</dbReference>
<dbReference type="InterPro" id="IPR001242">
    <property type="entry name" value="Condensatn"/>
</dbReference>
<dbReference type="InterPro" id="IPR020806">
    <property type="entry name" value="PKS_PP-bd"/>
</dbReference>
<dbReference type="InterPro" id="IPR009081">
    <property type="entry name" value="PP-bd_ACP"/>
</dbReference>
<dbReference type="InterPro" id="IPR006162">
    <property type="entry name" value="Ppantetheine_attach_site"/>
</dbReference>
<dbReference type="NCBIfam" id="TIGR01733">
    <property type="entry name" value="AA-adenyl-dom"/>
    <property type="match status" value="1"/>
</dbReference>
<dbReference type="PANTHER" id="PTHR45527:SF1">
    <property type="entry name" value="FATTY ACID SYNTHASE"/>
    <property type="match status" value="1"/>
</dbReference>
<dbReference type="PANTHER" id="PTHR45527">
    <property type="entry name" value="NONRIBOSOMAL PEPTIDE SYNTHETASE"/>
    <property type="match status" value="1"/>
</dbReference>
<dbReference type="Pfam" id="PF00501">
    <property type="entry name" value="AMP-binding"/>
    <property type="match status" value="1"/>
</dbReference>
<dbReference type="Pfam" id="PF00668">
    <property type="entry name" value="Condensation"/>
    <property type="match status" value="2"/>
</dbReference>
<dbReference type="Pfam" id="PF00550">
    <property type="entry name" value="PP-binding"/>
    <property type="match status" value="2"/>
</dbReference>
<dbReference type="SMART" id="SM00823">
    <property type="entry name" value="PKS_PP"/>
    <property type="match status" value="2"/>
</dbReference>
<dbReference type="SUPFAM" id="SSF56801">
    <property type="entry name" value="Acetyl-CoA synthetase-like"/>
    <property type="match status" value="1"/>
</dbReference>
<dbReference type="SUPFAM" id="SSF47336">
    <property type="entry name" value="ACP-like"/>
    <property type="match status" value="2"/>
</dbReference>
<dbReference type="SUPFAM" id="SSF52777">
    <property type="entry name" value="CoA-dependent acyltransferases"/>
    <property type="match status" value="4"/>
</dbReference>
<dbReference type="PROSITE" id="PS50075">
    <property type="entry name" value="CARRIER"/>
    <property type="match status" value="2"/>
</dbReference>
<dbReference type="PROSITE" id="PS00012">
    <property type="entry name" value="PHOSPHOPANTETHEINE"/>
    <property type="match status" value="1"/>
</dbReference>
<proteinExistence type="evidence at transcript level"/>
<name>NPS1_AJECA</name>
<gene>
    <name evidence="6" type="primary">NPS1</name>
</gene>
<accession>B2KWH8</accession>
<protein>
    <recommendedName>
        <fullName evidence="6">Nonribosomal peptide synthetase 1</fullName>
        <shortName evidence="6">NPRS 1</shortName>
        <ecNumber evidence="8">6.3.2.-</ecNumber>
    </recommendedName>
    <alternativeName>
        <fullName evidence="6">Siderophore biosynthesis cluster protein NPS1</fullName>
    </alternativeName>
    <alternativeName>
        <fullName evidence="7">Siderophore synthetase NPS1</fullName>
    </alternativeName>
</protein>
<feature type="chain" id="PRO_0000444383" description="Nonribosomal peptide synthetase 1">
    <location>
        <begin position="1"/>
        <end position="1813"/>
    </location>
</feature>
<feature type="domain" description="Carrier 1" evidence="3">
    <location>
        <begin position="624"/>
        <end position="699"/>
    </location>
</feature>
<feature type="domain" description="Carrier 2" evidence="3">
    <location>
        <begin position="1282"/>
        <end position="1358"/>
    </location>
</feature>
<feature type="region of interest" description="Adenylation" evidence="2">
    <location>
        <begin position="89"/>
        <end position="494"/>
    </location>
</feature>
<feature type="region of interest" description="Condensation 1" evidence="2">
    <location>
        <begin position="738"/>
        <end position="1159"/>
    </location>
</feature>
<feature type="region of interest" description="Condensation 2" evidence="2">
    <location>
        <begin position="1427"/>
        <end position="1806"/>
    </location>
</feature>
<feature type="modified residue" description="O-(pantetheine 4'-phosphoryl)serine" evidence="3">
    <location>
        <position position="660"/>
    </location>
</feature>
<feature type="modified residue" description="O-(pantetheine 4'-phosphoryl)serine" evidence="3">
    <location>
        <position position="1319"/>
    </location>
</feature>
<sequence length="1813" mass="199890">MQLPFYVEALASNPKLLMKQHGQHATLSLHAVHIQCSGFMDILDSILKNTDQTIGQAMQLGDRELQQLWKWNASVPQTLDDCIHDIFVEKARRDPSRQAVVSWDGELSYGEVDQFSTLLAIHLIKLGVKFGNHVLLCFEKSMWTVVAVLAVMKSGGTLVLTDPSQPEARLQTIATEVGANLMLTSERQEELGKRILAGGVIVVNHDFFQQIQTSVLPPASTTDLPSVPGSSPLYTIFTSGSTGKPKGVVISHANYTSGALPRAEAVGYGPHSRVLDFPSYAFDVSIDCMLCTLAHGGCVCVPSEDDRVNNLSGAIRNMKVNMAHMTPSVARVLGEDTLSSLEVLGLGGESVSVRDAANWGKLTKVIIAYGPSECTVGCTINNEIALDRAYTSIGKGVGGVTWVVDPTDHSRLMPIGAIGELIIEGPIVGRGYLNDPERTSSVFIEDPMWLLSGCQGYPGRHGRFYKTGDLVKYDPDSSGSIVFVGRGDQQVKLRGQRVELGEVEHHLRTRLPAGNVVAAEVITPGGKGDQPTLVAFIAEKTTTKSQTNKEIATFSTELRHSLEVMDKALGSVLPRYMVPSAYIPLLEMPLLVSCKVDRKKLRSLGSAMSRKELIRHKTFSSQKEPQSERERQLAHLWKCLFGAEAEIDVQSNFFDLGGDSLMAMKLVAAARAENLLTSVADIFRHPTLAELAITLKHSDSEAEIDVPPFSLLDSHWKENNARIETAKLCGIDATSVMDVYPCTTLQEGLMALSAKVSEAYVAQRVVELADFQTAQRLQRAFETAAADSPILRTRIVQVPGRGLMQVVLKDGITWRAGTTLEEYLVKDRNESMGLGTPLARFAITSNETTGKVHFVLTIHHALYDGWSMPLVVRRVNRAFNNQESERSVAFNSFIKHLSGLNHKDSEIYWKEQLQGANGLQFPALPRAGYQTQAQSLLEQYFPLGKTSASSTSIATSIRAAWALVAGKYTLSDDVVFGETLTGRNAPVVGIEKIEGPMITTVPVRVRFDRNARVSEYLRRIHDDSILRIPHEHMGLQHIRRLSPDAREACELRTGIVIHPTTTEDGKNLTGDGPANGFVPAGDEDAAREALKFNTYALMLVCSLDPKGFLVMASFDSATIDVCQMDKVLGQFGQTVQQLCENGNALVSDLLPMTDDELAEIWRFSNTYKPNSGNEVVLGHDYSHATATWIVAPEDSEQLVPLGGIGELVIEGDFPTNTSIQISGTKWLSAGHRDIPGRQATLHKTGQLAKYNSDGSLVILGGKGGNIKSDMEIKKPEAKSRSQVTTPKQQKLRKLWARVLGISEDEVGSNDSFFDLGGDSISAMKLVSEGRMENLELVVMQVFQHRRFHDMADIAKESLPLQVSTKQYSPFSTLDVSDVDTFISESIRPSLLNSSWKVVDVLPARPLQEIAVDGTINLPRYSARYELFYLDAAVDQSHLLKSCQELISRNEILRTIFVKSGGSCFGVVIEELQLPLDEYQIDGDLTAFAEQLCGLDIQTVMSLGSPFIKFFVVQSSSGLSCLIMRISHAQYDEICLPILLRQLSALYEGELVPAGLPFSSFVHHIVRNNIPQSIEYWRRLLQGSSMSVLRPSTPLISKKSIFISKTFDISSRSKEITLATLPTAAWALCLARRLSLRDVTFGEVVSGRNIDFANCDTVVGPTWQYIPVRVKFKSGWTVIDLLNFVQHQHISSTPFEGIGLKEIVRKCTDWPETTEWFDSVVHQDVEHVESLRFLSANSRMDTIYPHLEPLREWKIQAFPKGDSLCIEIVTFESWRAEADSILNEMGDIISLLVTKPNSTLFQTDVMEESTPPTS</sequence>
<comment type="function">
    <text evidence="5">Nonribosomal peptide synthetase; part of the gene cluster that mediates the biosynthesis of hydroxamate-containing siderophores that play a critical role in virulence via intracellular iron acquisition during macrophage infection (PubMed:18404210).</text>
</comment>
<comment type="pathway">
    <text evidence="8">Siderophore biosynthesis.</text>
</comment>
<comment type="induction">
    <text evidence="4 5">Expression is induced during iron deprivation (PubMed:18404210). Also induced in response to reactive nitrogen species (PubMed:16030248).</text>
</comment>
<comment type="domain">
    <text evidence="1 8">NRP synthetases are composed of discrete domains (adenylation (A), thiolation (T) or peptidyl carrier protein (PCP) and condensation (C) domains) which when grouped together are referred to as a single module (By similarity). Each module is responsible for the recognition (via the A domain) and incorporation of a single amino acid into the growing peptide product (By similarity). Thus, an NRP synthetase is generally composed of one or more modules and can terminate in a thioesterase domain (TE) that releases the newly synthesized peptide from the enzyme (By similarity). Occasionally, methyltransferase domains (responsible for amino acid methylation) are present within the NRP synthetase (By similarity). NPS1 has the following architecture: A-T-C-T-C.</text>
</comment>
<comment type="similarity">
    <text evidence="7">Belongs to the NRP synthetase family.</text>
</comment>